<reference key="1">
    <citation type="journal article" date="2008" name="PLoS ONE">
        <title>Environmental adaptation: genomic analysis of the piezotolerant and psychrotolerant deep-sea iron reducing bacterium Shewanella piezotolerans WP3.</title>
        <authorList>
            <person name="Wang F."/>
            <person name="Wang J."/>
            <person name="Jian H."/>
            <person name="Zhang B."/>
            <person name="Li S."/>
            <person name="Wang F."/>
            <person name="Zeng X."/>
            <person name="Gao L."/>
            <person name="Bartlett D.H."/>
            <person name="Yu J."/>
            <person name="Hu S."/>
            <person name="Xiao X."/>
        </authorList>
    </citation>
    <scope>NUCLEOTIDE SEQUENCE [LARGE SCALE GENOMIC DNA]</scope>
    <source>
        <strain>WP3 / JCM 13877</strain>
    </source>
</reference>
<comment type="sequence caution" evidence="2">
    <conflict type="erroneous initiation">
        <sequence resource="EMBL-CDS" id="ACJ29040"/>
    </conflict>
</comment>
<accession>B8CNS1</accession>
<protein>
    <recommendedName>
        <fullName evidence="1">YcgL domain-containing protein swp_2294</fullName>
    </recommendedName>
</protein>
<organism>
    <name type="scientific">Shewanella piezotolerans (strain WP3 / JCM 13877)</name>
    <dbReference type="NCBI Taxonomy" id="225849"/>
    <lineage>
        <taxon>Bacteria</taxon>
        <taxon>Pseudomonadati</taxon>
        <taxon>Pseudomonadota</taxon>
        <taxon>Gammaproteobacteria</taxon>
        <taxon>Alteromonadales</taxon>
        <taxon>Shewanellaceae</taxon>
        <taxon>Shewanella</taxon>
    </lineage>
</organism>
<sequence length="93" mass="10809">MICAVYKSLRKADSYLFVEKRNEFERVPEALMAMFGEPQLVMMLPIDKRDHLGFADIKKVKAELKDKGFYLQLPPPVVNLLEQHKKDIGFNPE</sequence>
<evidence type="ECO:0000255" key="1">
    <source>
        <dbReference type="HAMAP-Rule" id="MF_01866"/>
    </source>
</evidence>
<evidence type="ECO:0000305" key="2"/>
<gene>
    <name type="ordered locus">swp_2294</name>
</gene>
<dbReference type="EMBL" id="CP000472">
    <property type="protein sequence ID" value="ACJ29040.1"/>
    <property type="status" value="ALT_INIT"/>
    <property type="molecule type" value="Genomic_DNA"/>
</dbReference>
<dbReference type="RefSeq" id="WP_044555833.1">
    <property type="nucleotide sequence ID" value="NC_011566.1"/>
</dbReference>
<dbReference type="SMR" id="B8CNS1"/>
<dbReference type="STRING" id="225849.swp_2294"/>
<dbReference type="KEGG" id="swp:swp_2294"/>
<dbReference type="eggNOG" id="COG3100">
    <property type="taxonomic scope" value="Bacteria"/>
</dbReference>
<dbReference type="HOGENOM" id="CLU_155118_1_0_6"/>
<dbReference type="OrthoDB" id="7062382at2"/>
<dbReference type="Proteomes" id="UP000000753">
    <property type="component" value="Chromosome"/>
</dbReference>
<dbReference type="Gene3D" id="3.10.510.20">
    <property type="entry name" value="YcgL domain"/>
    <property type="match status" value="1"/>
</dbReference>
<dbReference type="HAMAP" id="MF_01866">
    <property type="entry name" value="UPF0745"/>
    <property type="match status" value="1"/>
</dbReference>
<dbReference type="InterPro" id="IPR038068">
    <property type="entry name" value="YcgL-like_sf"/>
</dbReference>
<dbReference type="InterPro" id="IPR027354">
    <property type="entry name" value="YcgL_dom"/>
</dbReference>
<dbReference type="PANTHER" id="PTHR38109">
    <property type="entry name" value="PROTEIN YCGL"/>
    <property type="match status" value="1"/>
</dbReference>
<dbReference type="PANTHER" id="PTHR38109:SF1">
    <property type="entry name" value="PROTEIN YCGL"/>
    <property type="match status" value="1"/>
</dbReference>
<dbReference type="Pfam" id="PF05166">
    <property type="entry name" value="YcgL"/>
    <property type="match status" value="1"/>
</dbReference>
<dbReference type="SUPFAM" id="SSF160191">
    <property type="entry name" value="YcgL-like"/>
    <property type="match status" value="1"/>
</dbReference>
<dbReference type="PROSITE" id="PS51648">
    <property type="entry name" value="YCGL"/>
    <property type="match status" value="1"/>
</dbReference>
<feature type="chain" id="PRO_0000375374" description="YcgL domain-containing protein swp_2294">
    <location>
        <begin position="1"/>
        <end position="93"/>
    </location>
</feature>
<feature type="domain" description="YcgL" evidence="1">
    <location>
        <begin position="1"/>
        <end position="85"/>
    </location>
</feature>
<name>Y2294_SHEPW</name>
<proteinExistence type="inferred from homology"/>